<proteinExistence type="evidence at transcript level"/>
<reference key="1">
    <citation type="submission" date="2006-06" db="EMBL/GenBank/DDBJ databases">
        <authorList>
            <consortium name="NIH - Mammalian Gene Collection (MGC) project"/>
        </authorList>
    </citation>
    <scope>NUCLEOTIDE SEQUENCE [LARGE SCALE MRNA]</scope>
    <source>
        <strain>Hereford</strain>
        <tissue>Fetal cerebellum</tissue>
    </source>
</reference>
<protein>
    <recommendedName>
        <fullName>Arachidonate 5-lipoxygenase-activating protein</fullName>
    </recommendedName>
</protein>
<sequence length="161" mass="18028">MDQEAVGNIVLLAIVTLISVVQNGFFAHKVEHESKTHNGRSFQRTGTLAFERVYTANQNCVDAYPTFLVMLWSAGLLCSQVPAAFAGLMYLFVRQKYFVGYLGERTQSTPGYIFGKRIILFLFAMSLAGILNYFFIALFGSDFENYIKTVTTTISPLLLIP</sequence>
<dbReference type="EMBL" id="BC118389">
    <property type="protein sequence ID" value="AAI18390.1"/>
    <property type="molecule type" value="mRNA"/>
</dbReference>
<dbReference type="RefSeq" id="NP_001069761.1">
    <property type="nucleotide sequence ID" value="NM_001076293.2"/>
</dbReference>
<dbReference type="SMR" id="Q148F2"/>
<dbReference type="FunCoup" id="Q148F2">
    <property type="interactions" value="432"/>
</dbReference>
<dbReference type="STRING" id="9913.ENSBTAP00000017570"/>
<dbReference type="PaxDb" id="9913-ENSBTAP00000017570"/>
<dbReference type="Ensembl" id="ENSBTAT00000080933.2">
    <property type="protein sequence ID" value="ENSBTAP00000070351.1"/>
    <property type="gene ID" value="ENSBTAG00000013201.5"/>
</dbReference>
<dbReference type="GeneID" id="613869"/>
<dbReference type="KEGG" id="bta:613869"/>
<dbReference type="CTD" id="241"/>
<dbReference type="VEuPathDB" id="HostDB:ENSBTAG00000013201"/>
<dbReference type="VGNC" id="VGNC:25845">
    <property type="gene designation" value="ALOX5AP"/>
</dbReference>
<dbReference type="eggNOG" id="ENOG502RZJB">
    <property type="taxonomic scope" value="Eukaryota"/>
</dbReference>
<dbReference type="GeneTree" id="ENSGT00940000158706"/>
<dbReference type="HOGENOM" id="CLU_110291_0_0_1"/>
<dbReference type="InParanoid" id="Q148F2"/>
<dbReference type="OMA" id="NAPWHTQ"/>
<dbReference type="OrthoDB" id="8659873at2759"/>
<dbReference type="TreeFam" id="TF105328"/>
<dbReference type="Reactome" id="R-BTA-2142688">
    <property type="pathway name" value="Synthesis of 5-eicosatetraenoic acids"/>
</dbReference>
<dbReference type="Reactome" id="R-BTA-2142691">
    <property type="pathway name" value="Synthesis of Leukotrienes (LT) and Eoxins (EX)"/>
</dbReference>
<dbReference type="Reactome" id="R-BTA-2142700">
    <property type="pathway name" value="Biosynthesis of Lipoxins (LX)"/>
</dbReference>
<dbReference type="Proteomes" id="UP000009136">
    <property type="component" value="Chromosome 12"/>
</dbReference>
<dbReference type="Bgee" id="ENSBTAG00000013201">
    <property type="expression patterns" value="Expressed in neutrophil and 98 other cell types or tissues"/>
</dbReference>
<dbReference type="GO" id="GO:0005783">
    <property type="term" value="C:endoplasmic reticulum"/>
    <property type="evidence" value="ECO:0000318"/>
    <property type="project" value="GO_Central"/>
</dbReference>
<dbReference type="GO" id="GO:0005789">
    <property type="term" value="C:endoplasmic reticulum membrane"/>
    <property type="evidence" value="ECO:0007669"/>
    <property type="project" value="UniProtKB-SubCell"/>
</dbReference>
<dbReference type="GO" id="GO:0005635">
    <property type="term" value="C:nuclear envelope"/>
    <property type="evidence" value="ECO:0000250"/>
    <property type="project" value="UniProtKB"/>
</dbReference>
<dbReference type="GO" id="GO:0031965">
    <property type="term" value="C:nuclear membrane"/>
    <property type="evidence" value="ECO:0000250"/>
    <property type="project" value="UniProtKB"/>
</dbReference>
<dbReference type="GO" id="GO:0050544">
    <property type="term" value="F:arachidonate binding"/>
    <property type="evidence" value="ECO:0000250"/>
    <property type="project" value="UniProtKB"/>
</dbReference>
<dbReference type="GO" id="GO:0008047">
    <property type="term" value="F:enzyme activator activity"/>
    <property type="evidence" value="ECO:0007669"/>
    <property type="project" value="InterPro"/>
</dbReference>
<dbReference type="GO" id="GO:0004602">
    <property type="term" value="F:glutathione peroxidase activity"/>
    <property type="evidence" value="ECO:0000318"/>
    <property type="project" value="GO_Central"/>
</dbReference>
<dbReference type="GO" id="GO:0004364">
    <property type="term" value="F:glutathione transferase activity"/>
    <property type="evidence" value="ECO:0000318"/>
    <property type="project" value="GO_Central"/>
</dbReference>
<dbReference type="GO" id="GO:0004464">
    <property type="term" value="F:leukotriene-C4 synthase activity"/>
    <property type="evidence" value="ECO:0000318"/>
    <property type="project" value="GO_Central"/>
</dbReference>
<dbReference type="GO" id="GO:0019370">
    <property type="term" value="P:leukotriene biosynthetic process"/>
    <property type="evidence" value="ECO:0000318"/>
    <property type="project" value="GO_Central"/>
</dbReference>
<dbReference type="FunFam" id="1.20.120.550:FF:000003">
    <property type="entry name" value="Leukotriene C4 synthase"/>
    <property type="match status" value="1"/>
</dbReference>
<dbReference type="Gene3D" id="1.20.120.550">
    <property type="entry name" value="Membrane associated eicosanoid/glutathione metabolism-like domain"/>
    <property type="match status" value="1"/>
</dbReference>
<dbReference type="InterPro" id="IPR001446">
    <property type="entry name" value="5_LipOase_AP"/>
</dbReference>
<dbReference type="InterPro" id="IPR018295">
    <property type="entry name" value="FLAP/GST2/LTC4S_CS"/>
</dbReference>
<dbReference type="InterPro" id="IPR050997">
    <property type="entry name" value="MAPEG"/>
</dbReference>
<dbReference type="InterPro" id="IPR023352">
    <property type="entry name" value="MAPEG-like_dom_sf"/>
</dbReference>
<dbReference type="InterPro" id="IPR001129">
    <property type="entry name" value="Membr-assoc_MAPEG"/>
</dbReference>
<dbReference type="PANTHER" id="PTHR10250:SF2">
    <property type="entry name" value="ARACHIDONATE 5-LIPOXYGENASE-ACTIVATING PROTEIN"/>
    <property type="match status" value="1"/>
</dbReference>
<dbReference type="PANTHER" id="PTHR10250">
    <property type="entry name" value="MICROSOMAL GLUTATHIONE S-TRANSFERASE"/>
    <property type="match status" value="1"/>
</dbReference>
<dbReference type="Pfam" id="PF01124">
    <property type="entry name" value="MAPEG"/>
    <property type="match status" value="1"/>
</dbReference>
<dbReference type="PRINTS" id="PR00488">
    <property type="entry name" value="5LPOXGNASEAP"/>
</dbReference>
<dbReference type="SUPFAM" id="SSF161084">
    <property type="entry name" value="MAPEG domain-like"/>
    <property type="match status" value="1"/>
</dbReference>
<dbReference type="PROSITE" id="PS01297">
    <property type="entry name" value="FLAP_GST2_LTC4S"/>
    <property type="match status" value="1"/>
</dbReference>
<keyword id="KW-0256">Endoplasmic reticulum</keyword>
<keyword id="KW-0434">Leukotriene biosynthesis</keyword>
<keyword id="KW-0472">Membrane</keyword>
<keyword id="KW-0539">Nucleus</keyword>
<keyword id="KW-1185">Reference proteome</keyword>
<keyword id="KW-0812">Transmembrane</keyword>
<keyword id="KW-1133">Transmembrane helix</keyword>
<comment type="function">
    <text evidence="1">Required for leukotriene biosynthesis by ALOX5 (5-lipoxygenase). Anchors ALOX5 to the membrane. Binds arachidonic acid, and could play an essential role in the transfer of arachidonic acid to ALOX5. Binds to MK-886, a compound that blocks the biosynthesis of leukotrienes (By similarity).</text>
</comment>
<comment type="subunit">
    <text evidence="1">Homotrimer. Interacts with LTC4S and ALOX5 (By similarity).</text>
</comment>
<comment type="subcellular location">
    <subcellularLocation>
        <location evidence="1">Nucleus membrane</location>
        <topology evidence="1">Multi-pass membrane protein</topology>
    </subcellularLocation>
    <subcellularLocation>
        <location evidence="1">Endoplasmic reticulum membrane</location>
        <topology evidence="1">Multi-pass membrane protein</topology>
    </subcellularLocation>
</comment>
<comment type="domain">
    <text evidence="1">The C-terminal part after residue 140 is mostly disordered.</text>
</comment>
<comment type="similarity">
    <text evidence="2">Belongs to the MAPEG family.</text>
</comment>
<evidence type="ECO:0000250" key="1"/>
<evidence type="ECO:0000305" key="2"/>
<gene>
    <name type="primary">ALOX5AP</name>
</gene>
<organism>
    <name type="scientific">Bos taurus</name>
    <name type="common">Bovine</name>
    <dbReference type="NCBI Taxonomy" id="9913"/>
    <lineage>
        <taxon>Eukaryota</taxon>
        <taxon>Metazoa</taxon>
        <taxon>Chordata</taxon>
        <taxon>Craniata</taxon>
        <taxon>Vertebrata</taxon>
        <taxon>Euteleostomi</taxon>
        <taxon>Mammalia</taxon>
        <taxon>Eutheria</taxon>
        <taxon>Laurasiatheria</taxon>
        <taxon>Artiodactyla</taxon>
        <taxon>Ruminantia</taxon>
        <taxon>Pecora</taxon>
        <taxon>Bovidae</taxon>
        <taxon>Bovinae</taxon>
        <taxon>Bos</taxon>
    </lineage>
</organism>
<accession>Q148F2</accession>
<name>AL5AP_BOVIN</name>
<feature type="chain" id="PRO_0000260253" description="Arachidonate 5-lipoxygenase-activating protein">
    <location>
        <begin position="1"/>
        <end position="161"/>
    </location>
</feature>
<feature type="topological domain" description="Lumenal" evidence="1">
    <location>
        <begin position="1"/>
        <end position="8"/>
    </location>
</feature>
<feature type="transmembrane region" description="Helical" evidence="1">
    <location>
        <begin position="9"/>
        <end position="30"/>
    </location>
</feature>
<feature type="topological domain" description="Cytoplasmic" evidence="1">
    <location>
        <begin position="31"/>
        <end position="52"/>
    </location>
</feature>
<feature type="transmembrane region" description="Helical" evidence="1">
    <location>
        <begin position="53"/>
        <end position="77"/>
    </location>
</feature>
<feature type="topological domain" description="Lumenal" evidence="1">
    <location>
        <begin position="78"/>
        <end position="80"/>
    </location>
</feature>
<feature type="transmembrane region" description="Helical" evidence="1">
    <location>
        <begin position="81"/>
        <end position="102"/>
    </location>
</feature>
<feature type="topological domain" description="Cytoplasmic" evidence="1">
    <location>
        <begin position="103"/>
        <end position="107"/>
    </location>
</feature>
<feature type="intramembrane region" evidence="1">
    <location>
        <begin position="108"/>
        <end position="115"/>
    </location>
</feature>
<feature type="transmembrane region" description="Helical" evidence="1">
    <location>
        <begin position="116"/>
        <end position="128"/>
    </location>
</feature>
<feature type="topological domain" description="Lumenal" evidence="1">
    <location>
        <begin position="129"/>
        <end position="161"/>
    </location>
</feature>